<keyword id="KW-0687">Ribonucleoprotein</keyword>
<keyword id="KW-0689">Ribosomal protein</keyword>
<keyword id="KW-0694">RNA-binding</keyword>
<keyword id="KW-0699">rRNA-binding</keyword>
<evidence type="ECO:0000255" key="1">
    <source>
        <dbReference type="HAMAP-Rule" id="MF_01363"/>
    </source>
</evidence>
<evidence type="ECO:0000305" key="2"/>
<feature type="chain" id="PRO_0000269433" description="Large ribosomal subunit protein bL21">
    <location>
        <begin position="1"/>
        <end position="106"/>
    </location>
</feature>
<gene>
    <name evidence="1" type="primary">rplU</name>
    <name type="ordered locus">XF_2424</name>
</gene>
<protein>
    <recommendedName>
        <fullName evidence="1">Large ribosomal subunit protein bL21</fullName>
    </recommendedName>
    <alternativeName>
        <fullName evidence="2">50S ribosomal protein L21</fullName>
    </alternativeName>
</protein>
<accession>Q9PAS1</accession>
<dbReference type="EMBL" id="AE003849">
    <property type="protein sequence ID" value="AAF85223.1"/>
    <property type="molecule type" value="Genomic_DNA"/>
</dbReference>
<dbReference type="PIR" id="A82560">
    <property type="entry name" value="A82560"/>
</dbReference>
<dbReference type="RefSeq" id="WP_010894869.1">
    <property type="nucleotide sequence ID" value="NC_002488.3"/>
</dbReference>
<dbReference type="SMR" id="Q9PAS1"/>
<dbReference type="STRING" id="160492.XF_2424"/>
<dbReference type="KEGG" id="xfa:XF_2424"/>
<dbReference type="eggNOG" id="COG0261">
    <property type="taxonomic scope" value="Bacteria"/>
</dbReference>
<dbReference type="HOGENOM" id="CLU_061463_3_3_6"/>
<dbReference type="Proteomes" id="UP000000812">
    <property type="component" value="Chromosome"/>
</dbReference>
<dbReference type="GO" id="GO:0005737">
    <property type="term" value="C:cytoplasm"/>
    <property type="evidence" value="ECO:0007669"/>
    <property type="project" value="UniProtKB-ARBA"/>
</dbReference>
<dbReference type="GO" id="GO:1990904">
    <property type="term" value="C:ribonucleoprotein complex"/>
    <property type="evidence" value="ECO:0007669"/>
    <property type="project" value="UniProtKB-KW"/>
</dbReference>
<dbReference type="GO" id="GO:0005840">
    <property type="term" value="C:ribosome"/>
    <property type="evidence" value="ECO:0007669"/>
    <property type="project" value="UniProtKB-KW"/>
</dbReference>
<dbReference type="GO" id="GO:0019843">
    <property type="term" value="F:rRNA binding"/>
    <property type="evidence" value="ECO:0007669"/>
    <property type="project" value="UniProtKB-UniRule"/>
</dbReference>
<dbReference type="GO" id="GO:0003735">
    <property type="term" value="F:structural constituent of ribosome"/>
    <property type="evidence" value="ECO:0007669"/>
    <property type="project" value="InterPro"/>
</dbReference>
<dbReference type="GO" id="GO:0006412">
    <property type="term" value="P:translation"/>
    <property type="evidence" value="ECO:0007669"/>
    <property type="project" value="UniProtKB-UniRule"/>
</dbReference>
<dbReference type="HAMAP" id="MF_01363">
    <property type="entry name" value="Ribosomal_bL21"/>
    <property type="match status" value="1"/>
</dbReference>
<dbReference type="InterPro" id="IPR028909">
    <property type="entry name" value="bL21-like"/>
</dbReference>
<dbReference type="InterPro" id="IPR036164">
    <property type="entry name" value="bL21-like_sf"/>
</dbReference>
<dbReference type="InterPro" id="IPR001787">
    <property type="entry name" value="Ribosomal_bL21"/>
</dbReference>
<dbReference type="InterPro" id="IPR018258">
    <property type="entry name" value="Ribosomal_bL21_CS"/>
</dbReference>
<dbReference type="NCBIfam" id="TIGR00061">
    <property type="entry name" value="L21"/>
    <property type="match status" value="1"/>
</dbReference>
<dbReference type="PANTHER" id="PTHR21349">
    <property type="entry name" value="50S RIBOSOMAL PROTEIN L21"/>
    <property type="match status" value="1"/>
</dbReference>
<dbReference type="PANTHER" id="PTHR21349:SF0">
    <property type="entry name" value="LARGE RIBOSOMAL SUBUNIT PROTEIN BL21M"/>
    <property type="match status" value="1"/>
</dbReference>
<dbReference type="Pfam" id="PF00829">
    <property type="entry name" value="Ribosomal_L21p"/>
    <property type="match status" value="1"/>
</dbReference>
<dbReference type="SUPFAM" id="SSF141091">
    <property type="entry name" value="L21p-like"/>
    <property type="match status" value="1"/>
</dbReference>
<dbReference type="PROSITE" id="PS01169">
    <property type="entry name" value="RIBOSOMAL_L21"/>
    <property type="match status" value="1"/>
</dbReference>
<sequence>MYAVLVTGGKQYRVVQGETLRVEKLDVETGSDVTFNSVLLMGSSDGIHVGEALKDASVTAKVVAHGRARKVRIIKFRRRKHHMKHQGHRQYYTEIQITGISGPAKQ</sequence>
<name>RL21_XYLFA</name>
<reference key="1">
    <citation type="journal article" date="2000" name="Nature">
        <title>The genome sequence of the plant pathogen Xylella fastidiosa.</title>
        <authorList>
            <person name="Simpson A.J.G."/>
            <person name="Reinach F.C."/>
            <person name="Arruda P."/>
            <person name="Abreu F.A."/>
            <person name="Acencio M."/>
            <person name="Alvarenga R."/>
            <person name="Alves L.M.C."/>
            <person name="Araya J.E."/>
            <person name="Baia G.S."/>
            <person name="Baptista C.S."/>
            <person name="Barros M.H."/>
            <person name="Bonaccorsi E.D."/>
            <person name="Bordin S."/>
            <person name="Bove J.M."/>
            <person name="Briones M.R.S."/>
            <person name="Bueno M.R.P."/>
            <person name="Camargo A.A."/>
            <person name="Camargo L.E.A."/>
            <person name="Carraro D.M."/>
            <person name="Carrer H."/>
            <person name="Colauto N.B."/>
            <person name="Colombo C."/>
            <person name="Costa F.F."/>
            <person name="Costa M.C.R."/>
            <person name="Costa-Neto C.M."/>
            <person name="Coutinho L.L."/>
            <person name="Cristofani M."/>
            <person name="Dias-Neto E."/>
            <person name="Docena C."/>
            <person name="El-Dorry H."/>
            <person name="Facincani A.P."/>
            <person name="Ferreira A.J.S."/>
            <person name="Ferreira V.C.A."/>
            <person name="Ferro J.A."/>
            <person name="Fraga J.S."/>
            <person name="Franca S.C."/>
            <person name="Franco M.C."/>
            <person name="Frohme M."/>
            <person name="Furlan L.R."/>
            <person name="Garnier M."/>
            <person name="Goldman G.H."/>
            <person name="Goldman M.H.S."/>
            <person name="Gomes S.L."/>
            <person name="Gruber A."/>
            <person name="Ho P.L."/>
            <person name="Hoheisel J.D."/>
            <person name="Junqueira M.L."/>
            <person name="Kemper E.L."/>
            <person name="Kitajima J.P."/>
            <person name="Krieger J.E."/>
            <person name="Kuramae E.E."/>
            <person name="Laigret F."/>
            <person name="Lambais M.R."/>
            <person name="Leite L.C.C."/>
            <person name="Lemos E.G.M."/>
            <person name="Lemos M.V.F."/>
            <person name="Lopes S.A."/>
            <person name="Lopes C.R."/>
            <person name="Machado J.A."/>
            <person name="Machado M.A."/>
            <person name="Madeira A.M.B.N."/>
            <person name="Madeira H.M.F."/>
            <person name="Marino C.L."/>
            <person name="Marques M.V."/>
            <person name="Martins E.A.L."/>
            <person name="Martins E.M.F."/>
            <person name="Matsukuma A.Y."/>
            <person name="Menck C.F.M."/>
            <person name="Miracca E.C."/>
            <person name="Miyaki C.Y."/>
            <person name="Monteiro-Vitorello C.B."/>
            <person name="Moon D.H."/>
            <person name="Nagai M.A."/>
            <person name="Nascimento A.L.T.O."/>
            <person name="Netto L.E.S."/>
            <person name="Nhani A. Jr."/>
            <person name="Nobrega F.G."/>
            <person name="Nunes L.R."/>
            <person name="Oliveira M.A."/>
            <person name="de Oliveira M.C."/>
            <person name="de Oliveira R.C."/>
            <person name="Palmieri D.A."/>
            <person name="Paris A."/>
            <person name="Peixoto B.R."/>
            <person name="Pereira G.A.G."/>
            <person name="Pereira H.A. Jr."/>
            <person name="Pesquero J.B."/>
            <person name="Quaggio R.B."/>
            <person name="Roberto P.G."/>
            <person name="Rodrigues V."/>
            <person name="de Rosa A.J.M."/>
            <person name="de Rosa V.E. Jr."/>
            <person name="de Sa R.G."/>
            <person name="Santelli R.V."/>
            <person name="Sawasaki H.E."/>
            <person name="da Silva A.C.R."/>
            <person name="da Silva A.M."/>
            <person name="da Silva F.R."/>
            <person name="Silva W.A. Jr."/>
            <person name="da Silveira J.F."/>
            <person name="Silvestri M.L.Z."/>
            <person name="Siqueira W.J."/>
            <person name="de Souza A.A."/>
            <person name="de Souza A.P."/>
            <person name="Terenzi M.F."/>
            <person name="Truffi D."/>
            <person name="Tsai S.M."/>
            <person name="Tsuhako M.H."/>
            <person name="Vallada H."/>
            <person name="Van Sluys M.A."/>
            <person name="Verjovski-Almeida S."/>
            <person name="Vettore A.L."/>
            <person name="Zago M.A."/>
            <person name="Zatz M."/>
            <person name="Meidanis J."/>
            <person name="Setubal J.C."/>
        </authorList>
    </citation>
    <scope>NUCLEOTIDE SEQUENCE [LARGE SCALE GENOMIC DNA]</scope>
    <source>
        <strain>9a5c</strain>
    </source>
</reference>
<organism>
    <name type="scientific">Xylella fastidiosa (strain 9a5c)</name>
    <dbReference type="NCBI Taxonomy" id="160492"/>
    <lineage>
        <taxon>Bacteria</taxon>
        <taxon>Pseudomonadati</taxon>
        <taxon>Pseudomonadota</taxon>
        <taxon>Gammaproteobacteria</taxon>
        <taxon>Lysobacterales</taxon>
        <taxon>Lysobacteraceae</taxon>
        <taxon>Xylella</taxon>
    </lineage>
</organism>
<proteinExistence type="inferred from homology"/>
<comment type="function">
    <text evidence="1">This protein binds to 23S rRNA in the presence of protein L20.</text>
</comment>
<comment type="subunit">
    <text evidence="1">Part of the 50S ribosomal subunit. Contacts protein L20.</text>
</comment>
<comment type="similarity">
    <text evidence="1">Belongs to the bacterial ribosomal protein bL21 family.</text>
</comment>